<sequence>MTKVTREEVEHIANLARLQISPEETEEMANTLESILDFAKQNDSADTEGVEPTYHVLDLQNVLREDKAIKGIPQELALKNAKETEDGQFKVPTIMNEEDA</sequence>
<feature type="chain" id="PRO_0000105332" description="Aspartyl/glutamyl-tRNA(Asn/Gln) amidotransferase subunit C">
    <location>
        <begin position="1"/>
        <end position="100"/>
    </location>
</feature>
<proteinExistence type="inferred from homology"/>
<comment type="function">
    <text evidence="1">Allows the formation of correctly charged Asn-tRNA(Asn) or Gln-tRNA(Gln) through the transamidation of misacylated Asp-tRNA(Asn) or Glu-tRNA(Gln) in organisms which lack either or both of asparaginyl-tRNA or glutaminyl-tRNA synthetases. The reaction takes place in the presence of glutamine and ATP through an activated phospho-Asp-tRNA(Asn) or phospho-Glu-tRNA(Gln).</text>
</comment>
<comment type="catalytic activity">
    <reaction evidence="1">
        <text>L-glutamyl-tRNA(Gln) + L-glutamine + ATP + H2O = L-glutaminyl-tRNA(Gln) + L-glutamate + ADP + phosphate + H(+)</text>
        <dbReference type="Rhea" id="RHEA:17521"/>
        <dbReference type="Rhea" id="RHEA-COMP:9681"/>
        <dbReference type="Rhea" id="RHEA-COMP:9684"/>
        <dbReference type="ChEBI" id="CHEBI:15377"/>
        <dbReference type="ChEBI" id="CHEBI:15378"/>
        <dbReference type="ChEBI" id="CHEBI:29985"/>
        <dbReference type="ChEBI" id="CHEBI:30616"/>
        <dbReference type="ChEBI" id="CHEBI:43474"/>
        <dbReference type="ChEBI" id="CHEBI:58359"/>
        <dbReference type="ChEBI" id="CHEBI:78520"/>
        <dbReference type="ChEBI" id="CHEBI:78521"/>
        <dbReference type="ChEBI" id="CHEBI:456216"/>
    </reaction>
</comment>
<comment type="catalytic activity">
    <reaction evidence="1">
        <text>L-aspartyl-tRNA(Asn) + L-glutamine + ATP + H2O = L-asparaginyl-tRNA(Asn) + L-glutamate + ADP + phosphate + 2 H(+)</text>
        <dbReference type="Rhea" id="RHEA:14513"/>
        <dbReference type="Rhea" id="RHEA-COMP:9674"/>
        <dbReference type="Rhea" id="RHEA-COMP:9677"/>
        <dbReference type="ChEBI" id="CHEBI:15377"/>
        <dbReference type="ChEBI" id="CHEBI:15378"/>
        <dbReference type="ChEBI" id="CHEBI:29985"/>
        <dbReference type="ChEBI" id="CHEBI:30616"/>
        <dbReference type="ChEBI" id="CHEBI:43474"/>
        <dbReference type="ChEBI" id="CHEBI:58359"/>
        <dbReference type="ChEBI" id="CHEBI:78515"/>
        <dbReference type="ChEBI" id="CHEBI:78516"/>
        <dbReference type="ChEBI" id="CHEBI:456216"/>
    </reaction>
</comment>
<comment type="subunit">
    <text evidence="1">Heterotrimer of A, B and C subunits.</text>
</comment>
<comment type="similarity">
    <text evidence="1">Belongs to the GatC family.</text>
</comment>
<name>GATC_STAAR</name>
<reference key="1">
    <citation type="journal article" date="2004" name="Proc. Natl. Acad. Sci. U.S.A.">
        <title>Complete genomes of two clinical Staphylococcus aureus strains: evidence for the rapid evolution of virulence and drug resistance.</title>
        <authorList>
            <person name="Holden M.T.G."/>
            <person name="Feil E.J."/>
            <person name="Lindsay J.A."/>
            <person name="Peacock S.J."/>
            <person name="Day N.P.J."/>
            <person name="Enright M.C."/>
            <person name="Foster T.J."/>
            <person name="Moore C.E."/>
            <person name="Hurst L."/>
            <person name="Atkin R."/>
            <person name="Barron A."/>
            <person name="Bason N."/>
            <person name="Bentley S.D."/>
            <person name="Chillingworth C."/>
            <person name="Chillingworth T."/>
            <person name="Churcher C."/>
            <person name="Clark L."/>
            <person name="Corton C."/>
            <person name="Cronin A."/>
            <person name="Doggett J."/>
            <person name="Dowd L."/>
            <person name="Feltwell T."/>
            <person name="Hance Z."/>
            <person name="Harris B."/>
            <person name="Hauser H."/>
            <person name="Holroyd S."/>
            <person name="Jagels K."/>
            <person name="James K.D."/>
            <person name="Lennard N."/>
            <person name="Line A."/>
            <person name="Mayes R."/>
            <person name="Moule S."/>
            <person name="Mungall K."/>
            <person name="Ormond D."/>
            <person name="Quail M.A."/>
            <person name="Rabbinowitsch E."/>
            <person name="Rutherford K.M."/>
            <person name="Sanders M."/>
            <person name="Sharp S."/>
            <person name="Simmonds M."/>
            <person name="Stevens K."/>
            <person name="Whitehead S."/>
            <person name="Barrell B.G."/>
            <person name="Spratt B.G."/>
            <person name="Parkhill J."/>
        </authorList>
    </citation>
    <scope>NUCLEOTIDE SEQUENCE [LARGE SCALE GENOMIC DNA]</scope>
    <source>
        <strain>MRSA252</strain>
    </source>
</reference>
<gene>
    <name evidence="1" type="primary">gatC</name>
    <name type="ordered locus">SAR1993</name>
</gene>
<dbReference type="EC" id="6.3.5.-" evidence="1"/>
<dbReference type="EMBL" id="BX571856">
    <property type="protein sequence ID" value="CAG40978.1"/>
    <property type="molecule type" value="Genomic_DNA"/>
</dbReference>
<dbReference type="RefSeq" id="WP_000170162.1">
    <property type="nucleotide sequence ID" value="NC_002952.2"/>
</dbReference>
<dbReference type="SMR" id="Q6GFF6"/>
<dbReference type="GeneID" id="98346286"/>
<dbReference type="KEGG" id="sar:SAR1993"/>
<dbReference type="HOGENOM" id="CLU_105899_1_2_9"/>
<dbReference type="Proteomes" id="UP000000596">
    <property type="component" value="Chromosome"/>
</dbReference>
<dbReference type="GO" id="GO:0050566">
    <property type="term" value="F:asparaginyl-tRNA synthase (glutamine-hydrolyzing) activity"/>
    <property type="evidence" value="ECO:0007669"/>
    <property type="project" value="RHEA"/>
</dbReference>
<dbReference type="GO" id="GO:0005524">
    <property type="term" value="F:ATP binding"/>
    <property type="evidence" value="ECO:0007669"/>
    <property type="project" value="UniProtKB-KW"/>
</dbReference>
<dbReference type="GO" id="GO:0050567">
    <property type="term" value="F:glutaminyl-tRNA synthase (glutamine-hydrolyzing) activity"/>
    <property type="evidence" value="ECO:0007669"/>
    <property type="project" value="UniProtKB-UniRule"/>
</dbReference>
<dbReference type="GO" id="GO:0070681">
    <property type="term" value="P:glutaminyl-tRNAGln biosynthesis via transamidation"/>
    <property type="evidence" value="ECO:0007669"/>
    <property type="project" value="TreeGrafter"/>
</dbReference>
<dbReference type="GO" id="GO:0006450">
    <property type="term" value="P:regulation of translational fidelity"/>
    <property type="evidence" value="ECO:0007669"/>
    <property type="project" value="InterPro"/>
</dbReference>
<dbReference type="GO" id="GO:0006412">
    <property type="term" value="P:translation"/>
    <property type="evidence" value="ECO:0007669"/>
    <property type="project" value="UniProtKB-UniRule"/>
</dbReference>
<dbReference type="Gene3D" id="1.10.20.60">
    <property type="entry name" value="Glu-tRNAGln amidotransferase C subunit, N-terminal domain"/>
    <property type="match status" value="1"/>
</dbReference>
<dbReference type="HAMAP" id="MF_00122">
    <property type="entry name" value="GatC"/>
    <property type="match status" value="1"/>
</dbReference>
<dbReference type="InterPro" id="IPR036113">
    <property type="entry name" value="Asp/Glu-ADT_sf_sub_c"/>
</dbReference>
<dbReference type="InterPro" id="IPR003837">
    <property type="entry name" value="GatC"/>
</dbReference>
<dbReference type="NCBIfam" id="TIGR00135">
    <property type="entry name" value="gatC"/>
    <property type="match status" value="1"/>
</dbReference>
<dbReference type="PANTHER" id="PTHR15004">
    <property type="entry name" value="GLUTAMYL-TRNA(GLN) AMIDOTRANSFERASE SUBUNIT C, MITOCHONDRIAL"/>
    <property type="match status" value="1"/>
</dbReference>
<dbReference type="PANTHER" id="PTHR15004:SF0">
    <property type="entry name" value="GLUTAMYL-TRNA(GLN) AMIDOTRANSFERASE SUBUNIT C, MITOCHONDRIAL"/>
    <property type="match status" value="1"/>
</dbReference>
<dbReference type="Pfam" id="PF02686">
    <property type="entry name" value="GatC"/>
    <property type="match status" value="1"/>
</dbReference>
<dbReference type="SUPFAM" id="SSF141000">
    <property type="entry name" value="Glu-tRNAGln amidotransferase C subunit"/>
    <property type="match status" value="1"/>
</dbReference>
<evidence type="ECO:0000255" key="1">
    <source>
        <dbReference type="HAMAP-Rule" id="MF_00122"/>
    </source>
</evidence>
<keyword id="KW-0067">ATP-binding</keyword>
<keyword id="KW-0436">Ligase</keyword>
<keyword id="KW-0547">Nucleotide-binding</keyword>
<keyword id="KW-0648">Protein biosynthesis</keyword>
<organism>
    <name type="scientific">Staphylococcus aureus (strain MRSA252)</name>
    <dbReference type="NCBI Taxonomy" id="282458"/>
    <lineage>
        <taxon>Bacteria</taxon>
        <taxon>Bacillati</taxon>
        <taxon>Bacillota</taxon>
        <taxon>Bacilli</taxon>
        <taxon>Bacillales</taxon>
        <taxon>Staphylococcaceae</taxon>
        <taxon>Staphylococcus</taxon>
    </lineage>
</organism>
<accession>Q6GFF6</accession>
<protein>
    <recommendedName>
        <fullName evidence="1">Aspartyl/glutamyl-tRNA(Asn/Gln) amidotransferase subunit C</fullName>
        <shortName evidence="1">Asp/Glu-ADT subunit C</shortName>
        <ecNumber evidence="1">6.3.5.-</ecNumber>
    </recommendedName>
</protein>